<feature type="chain" id="PRO_0000096709" description="Dibenzothiophene metabolism operon protein DoxH">
    <location>
        <begin position="1"/>
        <end position="211"/>
    </location>
</feature>
<comment type="function">
    <text>May be involved in the conversion of 2-hydroxy-4-(2'-oxo-3,5-cyclohexadienyl)-buta-2,4-dienoate to cis-O-hydroxybenzylidenepyruvate. DoxH and doxJ encode different enzymes that may have interchangeable functions.</text>
</comment>
<comment type="pathway">
    <text>Aromatic compound metabolism; naphthalene degradation.</text>
</comment>
<comment type="miscellaneous">
    <text evidence="1">Encoded on an unnamed 75 kb plasmid.</text>
</comment>
<evidence type="ECO:0000305" key="1">
    <source>
    </source>
</evidence>
<name>NAHQ_PSEU8</name>
<keyword id="KW-0058">Aromatic hydrocarbons catabolism</keyword>
<keyword id="KW-0614">Plasmid</keyword>
<sequence length="211" mass="22959">MIKRTICLVYPLFCLASPTWAEESPWTYRIGMTNVAFDASAKVYLNGQRVPGGSADASDNNALTFDFGYAINDQWNVRAIVGIPPTTKVTGAGTLPGIQLGKITYAPTVLTLNYNLPALGPVRPHIGAGVNYTRIFESRDANLKSFDADHAWSPALHVGADIDVNRGWFVSIDIRKLYLKTDASGYLGPQEAKARVTLDPLLTSIAIGRQF</sequence>
<geneLocation type="plasmid">
    <name>unnamed</name>
</geneLocation>
<protein>
    <recommendedName>
        <fullName>Dibenzothiophene metabolism operon protein DoxH</fullName>
    </recommendedName>
</protein>
<organism>
    <name type="scientific">Pseudomonas sp. (strain C18)</name>
    <dbReference type="NCBI Taxonomy" id="69011"/>
    <lineage>
        <taxon>Bacteria</taxon>
        <taxon>Pseudomonadati</taxon>
        <taxon>Pseudomonadota</taxon>
    </lineage>
</organism>
<proteinExistence type="predicted"/>
<dbReference type="EMBL" id="M60405">
    <property type="protein sequence ID" value="AAA16131.1"/>
    <property type="molecule type" value="Genomic_DNA"/>
</dbReference>
<dbReference type="PIR" id="G49343">
    <property type="entry name" value="G49343"/>
</dbReference>
<dbReference type="SMR" id="P0A146"/>
<dbReference type="UniPathway" id="UPA00082"/>
<dbReference type="GO" id="GO:0019867">
    <property type="term" value="C:outer membrane"/>
    <property type="evidence" value="ECO:0007669"/>
    <property type="project" value="InterPro"/>
</dbReference>
<dbReference type="GO" id="GO:0009056">
    <property type="term" value="P:catabolic process"/>
    <property type="evidence" value="ECO:0007669"/>
    <property type="project" value="UniProtKB-KW"/>
</dbReference>
<dbReference type="GO" id="GO:0055085">
    <property type="term" value="P:transmembrane transport"/>
    <property type="evidence" value="ECO:0007669"/>
    <property type="project" value="TreeGrafter"/>
</dbReference>
<dbReference type="Gene3D" id="2.40.160.20">
    <property type="match status" value="1"/>
</dbReference>
<dbReference type="InterPro" id="IPR011250">
    <property type="entry name" value="OMP/PagP_b-brl"/>
</dbReference>
<dbReference type="InterPro" id="IPR005618">
    <property type="entry name" value="OMPW"/>
</dbReference>
<dbReference type="PANTHER" id="PTHR36920">
    <property type="match status" value="1"/>
</dbReference>
<dbReference type="PANTHER" id="PTHR36920:SF1">
    <property type="entry name" value="OUTER MEMBRANE PROTEIN W"/>
    <property type="match status" value="1"/>
</dbReference>
<dbReference type="Pfam" id="PF03922">
    <property type="entry name" value="OmpW"/>
    <property type="match status" value="1"/>
</dbReference>
<dbReference type="SUPFAM" id="SSF56925">
    <property type="entry name" value="OMPA-like"/>
    <property type="match status" value="1"/>
</dbReference>
<reference key="1">
    <citation type="journal article" date="1993" name="J. Bacteriol.">
        <title>Metabolism of dibenzothiophene and naphthalene in Pseudomonas strains: complete DNA sequence of an upper naphthalene catabolic pathway.</title>
        <authorList>
            <person name="Denome S.A."/>
            <person name="Stanley D.C."/>
            <person name="Olson E.S."/>
            <person name="Young K.D."/>
        </authorList>
    </citation>
    <scope>NUCLEOTIDE SEQUENCE [GENOMIC DNA]</scope>
    <source>
        <strain>C18</strain>
        <plasmid>unnamed</plasmid>
    </source>
</reference>
<accession>P0A146</accession>
<accession>Q51498</accession>
<accession>Q52461</accession>
<gene>
    <name type="primary">doxH</name>
</gene>